<sequence>MAKAVTVKIKLVSTADTGYFYVTKKNSRTQTEKLSFKKYDPVARKHVEFKEAKIK</sequence>
<organism>
    <name type="scientific">Methylobacterium nodulans (strain LMG 21967 / CNCM I-2342 / ORS 2060)</name>
    <dbReference type="NCBI Taxonomy" id="460265"/>
    <lineage>
        <taxon>Bacteria</taxon>
        <taxon>Pseudomonadati</taxon>
        <taxon>Pseudomonadota</taxon>
        <taxon>Alphaproteobacteria</taxon>
        <taxon>Hyphomicrobiales</taxon>
        <taxon>Methylobacteriaceae</taxon>
        <taxon>Methylobacterium</taxon>
    </lineage>
</organism>
<accession>B8IN36</accession>
<proteinExistence type="inferred from homology"/>
<evidence type="ECO:0000255" key="1">
    <source>
        <dbReference type="HAMAP-Rule" id="MF_00294"/>
    </source>
</evidence>
<evidence type="ECO:0000305" key="2"/>
<comment type="similarity">
    <text evidence="1">Belongs to the bacterial ribosomal protein bL33 family.</text>
</comment>
<protein>
    <recommendedName>
        <fullName evidence="1">Large ribosomal subunit protein bL33</fullName>
    </recommendedName>
    <alternativeName>
        <fullName evidence="2">50S ribosomal protein L33</fullName>
    </alternativeName>
</protein>
<name>RL33_METNO</name>
<dbReference type="EMBL" id="CP001349">
    <property type="protein sequence ID" value="ACL62152.1"/>
    <property type="molecule type" value="Genomic_DNA"/>
</dbReference>
<dbReference type="RefSeq" id="WP_015933710.1">
    <property type="nucleotide sequence ID" value="NC_011894.1"/>
</dbReference>
<dbReference type="SMR" id="B8IN36"/>
<dbReference type="STRING" id="460265.Mnod_7415"/>
<dbReference type="KEGG" id="mno:Mnod_7415"/>
<dbReference type="eggNOG" id="COG0267">
    <property type="taxonomic scope" value="Bacteria"/>
</dbReference>
<dbReference type="HOGENOM" id="CLU_190949_1_1_5"/>
<dbReference type="OrthoDB" id="21586at2"/>
<dbReference type="Proteomes" id="UP000008207">
    <property type="component" value="Chromosome"/>
</dbReference>
<dbReference type="GO" id="GO:0022625">
    <property type="term" value="C:cytosolic large ribosomal subunit"/>
    <property type="evidence" value="ECO:0007669"/>
    <property type="project" value="TreeGrafter"/>
</dbReference>
<dbReference type="GO" id="GO:0003735">
    <property type="term" value="F:structural constituent of ribosome"/>
    <property type="evidence" value="ECO:0007669"/>
    <property type="project" value="InterPro"/>
</dbReference>
<dbReference type="GO" id="GO:0006412">
    <property type="term" value="P:translation"/>
    <property type="evidence" value="ECO:0007669"/>
    <property type="project" value="UniProtKB-UniRule"/>
</dbReference>
<dbReference type="Gene3D" id="2.20.28.120">
    <property type="entry name" value="Ribosomal protein L33"/>
    <property type="match status" value="1"/>
</dbReference>
<dbReference type="HAMAP" id="MF_00294">
    <property type="entry name" value="Ribosomal_bL33"/>
    <property type="match status" value="1"/>
</dbReference>
<dbReference type="InterPro" id="IPR001705">
    <property type="entry name" value="Ribosomal_bL33"/>
</dbReference>
<dbReference type="InterPro" id="IPR018264">
    <property type="entry name" value="Ribosomal_bL33_CS"/>
</dbReference>
<dbReference type="InterPro" id="IPR038584">
    <property type="entry name" value="Ribosomal_bL33_sf"/>
</dbReference>
<dbReference type="InterPro" id="IPR011332">
    <property type="entry name" value="Ribosomal_zn-bd"/>
</dbReference>
<dbReference type="NCBIfam" id="NF001860">
    <property type="entry name" value="PRK00595.1"/>
    <property type="match status" value="1"/>
</dbReference>
<dbReference type="NCBIfam" id="TIGR01023">
    <property type="entry name" value="rpmG_bact"/>
    <property type="match status" value="1"/>
</dbReference>
<dbReference type="PANTHER" id="PTHR15238">
    <property type="entry name" value="54S RIBOSOMAL PROTEIN L39, MITOCHONDRIAL"/>
    <property type="match status" value="1"/>
</dbReference>
<dbReference type="PANTHER" id="PTHR15238:SF1">
    <property type="entry name" value="LARGE RIBOSOMAL SUBUNIT PROTEIN BL33M"/>
    <property type="match status" value="1"/>
</dbReference>
<dbReference type="Pfam" id="PF00471">
    <property type="entry name" value="Ribosomal_L33"/>
    <property type="match status" value="1"/>
</dbReference>
<dbReference type="SUPFAM" id="SSF57829">
    <property type="entry name" value="Zn-binding ribosomal proteins"/>
    <property type="match status" value="1"/>
</dbReference>
<dbReference type="PROSITE" id="PS00582">
    <property type="entry name" value="RIBOSOMAL_L33"/>
    <property type="match status" value="1"/>
</dbReference>
<reference key="1">
    <citation type="submission" date="2009-01" db="EMBL/GenBank/DDBJ databases">
        <title>Complete sequence of chromosome of Methylobacterium nodulans ORS 2060.</title>
        <authorList>
            <consortium name="US DOE Joint Genome Institute"/>
            <person name="Lucas S."/>
            <person name="Copeland A."/>
            <person name="Lapidus A."/>
            <person name="Glavina del Rio T."/>
            <person name="Dalin E."/>
            <person name="Tice H."/>
            <person name="Bruce D."/>
            <person name="Goodwin L."/>
            <person name="Pitluck S."/>
            <person name="Sims D."/>
            <person name="Brettin T."/>
            <person name="Detter J.C."/>
            <person name="Han C."/>
            <person name="Larimer F."/>
            <person name="Land M."/>
            <person name="Hauser L."/>
            <person name="Kyrpides N."/>
            <person name="Ivanova N."/>
            <person name="Marx C.J."/>
            <person name="Richardson P."/>
        </authorList>
    </citation>
    <scope>NUCLEOTIDE SEQUENCE [LARGE SCALE GENOMIC DNA]</scope>
    <source>
        <strain>LMG 21967 / CNCM I-2342 / ORS 2060</strain>
    </source>
</reference>
<gene>
    <name evidence="1" type="primary">rpmG</name>
    <name type="ordered locus">Mnod_7415</name>
</gene>
<keyword id="KW-1185">Reference proteome</keyword>
<keyword id="KW-0687">Ribonucleoprotein</keyword>
<keyword id="KW-0689">Ribosomal protein</keyword>
<feature type="chain" id="PRO_1000194059" description="Large ribosomal subunit protein bL33">
    <location>
        <begin position="1"/>
        <end position="55"/>
    </location>
</feature>